<keyword id="KW-0489">Methyltransferase</keyword>
<keyword id="KW-1185">Reference proteome</keyword>
<keyword id="KW-0949">S-adenosyl-L-methionine</keyword>
<keyword id="KW-0808">Transferase</keyword>
<keyword id="KW-0831">Ubiquinone biosynthesis</keyword>
<gene>
    <name evidence="1" type="primary">ubiG</name>
    <name type="ordered locus">PD_1488</name>
</gene>
<feature type="chain" id="PRO_0000193412" description="Ubiquinone biosynthesis O-methyltransferase">
    <location>
        <begin position="1"/>
        <end position="246"/>
    </location>
</feature>
<feature type="binding site" evidence="1">
    <location>
        <position position="44"/>
    </location>
    <ligand>
        <name>S-adenosyl-L-methionine</name>
        <dbReference type="ChEBI" id="CHEBI:59789"/>
    </ligand>
</feature>
<feature type="binding site" evidence="1">
    <location>
        <position position="63"/>
    </location>
    <ligand>
        <name>S-adenosyl-L-methionine</name>
        <dbReference type="ChEBI" id="CHEBI:59789"/>
    </ligand>
</feature>
<feature type="binding site" evidence="1">
    <location>
        <position position="84"/>
    </location>
    <ligand>
        <name>S-adenosyl-L-methionine</name>
        <dbReference type="ChEBI" id="CHEBI:59789"/>
    </ligand>
</feature>
<feature type="binding site" evidence="1">
    <location>
        <position position="128"/>
    </location>
    <ligand>
        <name>S-adenosyl-L-methionine</name>
        <dbReference type="ChEBI" id="CHEBI:59789"/>
    </ligand>
</feature>
<reference key="1">
    <citation type="journal article" date="2003" name="J. Bacteriol.">
        <title>Comparative analyses of the complete genome sequences of Pierce's disease and citrus variegated chlorosis strains of Xylella fastidiosa.</title>
        <authorList>
            <person name="Van Sluys M.A."/>
            <person name="de Oliveira M.C."/>
            <person name="Monteiro-Vitorello C.B."/>
            <person name="Miyaki C.Y."/>
            <person name="Furlan L.R."/>
            <person name="Camargo L.E.A."/>
            <person name="da Silva A.C.R."/>
            <person name="Moon D.H."/>
            <person name="Takita M.A."/>
            <person name="Lemos E.G.M."/>
            <person name="Machado M.A."/>
            <person name="Ferro M.I.T."/>
            <person name="da Silva F.R."/>
            <person name="Goldman M.H.S."/>
            <person name="Goldman G.H."/>
            <person name="Lemos M.V.F."/>
            <person name="El-Dorry H."/>
            <person name="Tsai S.M."/>
            <person name="Carrer H."/>
            <person name="Carraro D.M."/>
            <person name="de Oliveira R.C."/>
            <person name="Nunes L.R."/>
            <person name="Siqueira W.J."/>
            <person name="Coutinho L.L."/>
            <person name="Kimura E.T."/>
            <person name="Ferro E.S."/>
            <person name="Harakava R."/>
            <person name="Kuramae E.E."/>
            <person name="Marino C.L."/>
            <person name="Giglioti E."/>
            <person name="Abreu I.L."/>
            <person name="Alves L.M.C."/>
            <person name="do Amaral A.M."/>
            <person name="Baia G.S."/>
            <person name="Blanco S.R."/>
            <person name="Brito M.S."/>
            <person name="Cannavan F.S."/>
            <person name="Celestino A.V."/>
            <person name="da Cunha A.F."/>
            <person name="Fenille R.C."/>
            <person name="Ferro J.A."/>
            <person name="Formighieri E.F."/>
            <person name="Kishi L.T."/>
            <person name="Leoni S.G."/>
            <person name="Oliveira A.R."/>
            <person name="Rosa V.E. Jr."/>
            <person name="Sassaki F.T."/>
            <person name="Sena J.A.D."/>
            <person name="de Souza A.A."/>
            <person name="Truffi D."/>
            <person name="Tsukumo F."/>
            <person name="Yanai G.M."/>
            <person name="Zaros L.G."/>
            <person name="Civerolo E.L."/>
            <person name="Simpson A.J.G."/>
            <person name="Almeida N.F. Jr."/>
            <person name="Setubal J.C."/>
            <person name="Kitajima J.P."/>
        </authorList>
    </citation>
    <scope>NUCLEOTIDE SEQUENCE [LARGE SCALE GENOMIC DNA]</scope>
    <source>
        <strain>Temecula1 / ATCC 700964</strain>
    </source>
</reference>
<sequence length="246" mass="27127">MPSSYDRVSKNYRQSELDKFASFTSGWWDPHGPQKPLHALNPVRLDYISKRVSLSGARVLDVGCGGGLLSEALARQGAHVTAIDLVPELIKVARLHGLESGIQVDYRIQAIEDLLAEQPAPFDAIACMEMLEHVPDPAAIVDACAHLLKPGGRLFVSTINRTLAAFMLAVVGAEYVVRLLPKGTHQYKDFIRPAELAAWLRHAGLHLEDVSGMRYEPWRNRARLTARTDINYLACAISPEASHATE</sequence>
<protein>
    <recommendedName>
        <fullName evidence="1">Ubiquinone biosynthesis O-methyltransferase</fullName>
    </recommendedName>
    <alternativeName>
        <fullName evidence="1">2-polyprenyl-6-hydroxyphenol methylase</fullName>
        <ecNumber evidence="1">2.1.1.222</ecNumber>
    </alternativeName>
    <alternativeName>
        <fullName evidence="1">3-demethylubiquinone 3-O-methyltransferase</fullName>
        <ecNumber evidence="1">2.1.1.64</ecNumber>
    </alternativeName>
</protein>
<accession>Q87BG5</accession>
<comment type="function">
    <text evidence="1">O-methyltransferase that catalyzes the 2 O-methylation steps in the ubiquinone biosynthetic pathway.</text>
</comment>
<comment type="catalytic activity">
    <reaction evidence="1">
        <text>a 3-demethylubiquinol + S-adenosyl-L-methionine = a ubiquinol + S-adenosyl-L-homocysteine + H(+)</text>
        <dbReference type="Rhea" id="RHEA:44380"/>
        <dbReference type="Rhea" id="RHEA-COMP:9566"/>
        <dbReference type="Rhea" id="RHEA-COMP:10914"/>
        <dbReference type="ChEBI" id="CHEBI:15378"/>
        <dbReference type="ChEBI" id="CHEBI:17976"/>
        <dbReference type="ChEBI" id="CHEBI:57856"/>
        <dbReference type="ChEBI" id="CHEBI:59789"/>
        <dbReference type="ChEBI" id="CHEBI:84422"/>
        <dbReference type="EC" id="2.1.1.64"/>
    </reaction>
</comment>
<comment type="catalytic activity">
    <reaction evidence="1">
        <text>a 3-(all-trans-polyprenyl)benzene-1,2-diol + S-adenosyl-L-methionine = a 2-methoxy-6-(all-trans-polyprenyl)phenol + S-adenosyl-L-homocysteine + H(+)</text>
        <dbReference type="Rhea" id="RHEA:31411"/>
        <dbReference type="Rhea" id="RHEA-COMP:9550"/>
        <dbReference type="Rhea" id="RHEA-COMP:9551"/>
        <dbReference type="ChEBI" id="CHEBI:15378"/>
        <dbReference type="ChEBI" id="CHEBI:57856"/>
        <dbReference type="ChEBI" id="CHEBI:59789"/>
        <dbReference type="ChEBI" id="CHEBI:62729"/>
        <dbReference type="ChEBI" id="CHEBI:62731"/>
        <dbReference type="EC" id="2.1.1.222"/>
    </reaction>
</comment>
<comment type="pathway">
    <text evidence="1">Cofactor biosynthesis; ubiquinone biosynthesis.</text>
</comment>
<comment type="similarity">
    <text evidence="1">Belongs to the methyltransferase superfamily. UbiG/COQ3 family.</text>
</comment>
<proteinExistence type="inferred from homology"/>
<organism>
    <name type="scientific">Xylella fastidiosa (strain Temecula1 / ATCC 700964)</name>
    <dbReference type="NCBI Taxonomy" id="183190"/>
    <lineage>
        <taxon>Bacteria</taxon>
        <taxon>Pseudomonadati</taxon>
        <taxon>Pseudomonadota</taxon>
        <taxon>Gammaproteobacteria</taxon>
        <taxon>Lysobacterales</taxon>
        <taxon>Lysobacteraceae</taxon>
        <taxon>Xylella</taxon>
    </lineage>
</organism>
<evidence type="ECO:0000255" key="1">
    <source>
        <dbReference type="HAMAP-Rule" id="MF_00472"/>
    </source>
</evidence>
<dbReference type="EC" id="2.1.1.222" evidence="1"/>
<dbReference type="EC" id="2.1.1.64" evidence="1"/>
<dbReference type="EMBL" id="AE009442">
    <property type="protein sequence ID" value="AAO29332.1"/>
    <property type="molecule type" value="Genomic_DNA"/>
</dbReference>
<dbReference type="RefSeq" id="WP_004088501.1">
    <property type="nucleotide sequence ID" value="NC_004556.1"/>
</dbReference>
<dbReference type="SMR" id="Q87BG5"/>
<dbReference type="GeneID" id="93905311"/>
<dbReference type="KEGG" id="xft:PD_1488"/>
<dbReference type="HOGENOM" id="CLU_042432_5_0_6"/>
<dbReference type="UniPathway" id="UPA00232"/>
<dbReference type="Proteomes" id="UP000002516">
    <property type="component" value="Chromosome"/>
</dbReference>
<dbReference type="GO" id="GO:0102208">
    <property type="term" value="F:2-polyprenyl-6-hydroxyphenol methylase activity"/>
    <property type="evidence" value="ECO:0007669"/>
    <property type="project" value="UniProtKB-EC"/>
</dbReference>
<dbReference type="GO" id="GO:0061542">
    <property type="term" value="F:3-demethylubiquinol 3-O-methyltransferase activity"/>
    <property type="evidence" value="ECO:0007669"/>
    <property type="project" value="UniProtKB-UniRule"/>
</dbReference>
<dbReference type="GO" id="GO:0010420">
    <property type="term" value="F:polyprenyldihydroxybenzoate methyltransferase activity"/>
    <property type="evidence" value="ECO:0007669"/>
    <property type="project" value="InterPro"/>
</dbReference>
<dbReference type="GO" id="GO:0032259">
    <property type="term" value="P:methylation"/>
    <property type="evidence" value="ECO:0007669"/>
    <property type="project" value="UniProtKB-KW"/>
</dbReference>
<dbReference type="CDD" id="cd02440">
    <property type="entry name" value="AdoMet_MTases"/>
    <property type="match status" value="1"/>
</dbReference>
<dbReference type="Gene3D" id="3.40.50.150">
    <property type="entry name" value="Vaccinia Virus protein VP39"/>
    <property type="match status" value="1"/>
</dbReference>
<dbReference type="HAMAP" id="MF_00472">
    <property type="entry name" value="UbiG"/>
    <property type="match status" value="1"/>
</dbReference>
<dbReference type="InterPro" id="IPR029063">
    <property type="entry name" value="SAM-dependent_MTases_sf"/>
</dbReference>
<dbReference type="InterPro" id="IPR010233">
    <property type="entry name" value="UbiG_MeTrfase"/>
</dbReference>
<dbReference type="NCBIfam" id="TIGR01983">
    <property type="entry name" value="UbiG"/>
    <property type="match status" value="1"/>
</dbReference>
<dbReference type="PANTHER" id="PTHR43464">
    <property type="entry name" value="METHYLTRANSFERASE"/>
    <property type="match status" value="1"/>
</dbReference>
<dbReference type="PANTHER" id="PTHR43464:SF19">
    <property type="entry name" value="UBIQUINONE BIOSYNTHESIS O-METHYLTRANSFERASE, MITOCHONDRIAL"/>
    <property type="match status" value="1"/>
</dbReference>
<dbReference type="Pfam" id="PF13489">
    <property type="entry name" value="Methyltransf_23"/>
    <property type="match status" value="1"/>
</dbReference>
<dbReference type="SUPFAM" id="SSF53335">
    <property type="entry name" value="S-adenosyl-L-methionine-dependent methyltransferases"/>
    <property type="match status" value="1"/>
</dbReference>
<name>UBIG_XYLFT</name>